<reference key="1">
    <citation type="journal article" date="2008" name="BMC Genomics">
        <title>The missing link: Bordetella petrii is endowed with both the metabolic versatility of environmental bacteria and virulence traits of pathogenic Bordetellae.</title>
        <authorList>
            <person name="Gross R."/>
            <person name="Guzman C.A."/>
            <person name="Sebaihia M."/>
            <person name="Martin dos Santos V.A.P."/>
            <person name="Pieper D.H."/>
            <person name="Koebnik R."/>
            <person name="Lechner M."/>
            <person name="Bartels D."/>
            <person name="Buhrmester J."/>
            <person name="Choudhuri J.V."/>
            <person name="Ebensen T."/>
            <person name="Gaigalat L."/>
            <person name="Herrmann S."/>
            <person name="Khachane A.N."/>
            <person name="Larisch C."/>
            <person name="Link S."/>
            <person name="Linke B."/>
            <person name="Meyer F."/>
            <person name="Mormann S."/>
            <person name="Nakunst D."/>
            <person name="Rueckert C."/>
            <person name="Schneiker-Bekel S."/>
            <person name="Schulze K."/>
            <person name="Voerholter F.-J."/>
            <person name="Yevsa T."/>
            <person name="Engle J.T."/>
            <person name="Goldman W.E."/>
            <person name="Puehler A."/>
            <person name="Goebel U.B."/>
            <person name="Goesmann A."/>
            <person name="Bloecker H."/>
            <person name="Kaiser O."/>
            <person name="Martinez-Arias R."/>
        </authorList>
    </citation>
    <scope>NUCLEOTIDE SEQUENCE [LARGE SCALE GENOMIC DNA]</scope>
    <source>
        <strain>ATCC BAA-461 / DSM 12804 / CCUG 43448</strain>
    </source>
</reference>
<feature type="chain" id="PRO_1000115723" description="1-deoxy-D-xylulose-5-phosphate synthase">
    <location>
        <begin position="1"/>
        <end position="627"/>
    </location>
</feature>
<feature type="binding site" evidence="1">
    <location>
        <position position="75"/>
    </location>
    <ligand>
        <name>thiamine diphosphate</name>
        <dbReference type="ChEBI" id="CHEBI:58937"/>
    </ligand>
</feature>
<feature type="binding site" evidence="1">
    <location>
        <begin position="116"/>
        <end position="118"/>
    </location>
    <ligand>
        <name>thiamine diphosphate</name>
        <dbReference type="ChEBI" id="CHEBI:58937"/>
    </ligand>
</feature>
<feature type="binding site" evidence="1">
    <location>
        <position position="147"/>
    </location>
    <ligand>
        <name>Mg(2+)</name>
        <dbReference type="ChEBI" id="CHEBI:18420"/>
    </ligand>
</feature>
<feature type="binding site" evidence="1">
    <location>
        <begin position="148"/>
        <end position="149"/>
    </location>
    <ligand>
        <name>thiamine diphosphate</name>
        <dbReference type="ChEBI" id="CHEBI:58937"/>
    </ligand>
</feature>
<feature type="binding site" evidence="1">
    <location>
        <position position="177"/>
    </location>
    <ligand>
        <name>Mg(2+)</name>
        <dbReference type="ChEBI" id="CHEBI:18420"/>
    </ligand>
</feature>
<feature type="binding site" evidence="1">
    <location>
        <position position="177"/>
    </location>
    <ligand>
        <name>thiamine diphosphate</name>
        <dbReference type="ChEBI" id="CHEBI:58937"/>
    </ligand>
</feature>
<feature type="binding site" evidence="1">
    <location>
        <position position="284"/>
    </location>
    <ligand>
        <name>thiamine diphosphate</name>
        <dbReference type="ChEBI" id="CHEBI:58937"/>
    </ligand>
</feature>
<feature type="binding site" evidence="1">
    <location>
        <position position="366"/>
    </location>
    <ligand>
        <name>thiamine diphosphate</name>
        <dbReference type="ChEBI" id="CHEBI:58937"/>
    </ligand>
</feature>
<organism>
    <name type="scientific">Bordetella petrii (strain ATCC BAA-461 / DSM 12804 / CCUG 43448)</name>
    <dbReference type="NCBI Taxonomy" id="340100"/>
    <lineage>
        <taxon>Bacteria</taxon>
        <taxon>Pseudomonadati</taxon>
        <taxon>Pseudomonadota</taxon>
        <taxon>Betaproteobacteria</taxon>
        <taxon>Burkholderiales</taxon>
        <taxon>Alcaligenaceae</taxon>
        <taxon>Bordetella</taxon>
    </lineage>
</organism>
<gene>
    <name evidence="1" type="primary">dxs</name>
    <name type="ordered locus">Bpet3060</name>
</gene>
<keyword id="KW-0414">Isoprene biosynthesis</keyword>
<keyword id="KW-0460">Magnesium</keyword>
<keyword id="KW-0479">Metal-binding</keyword>
<keyword id="KW-0784">Thiamine biosynthesis</keyword>
<keyword id="KW-0786">Thiamine pyrophosphate</keyword>
<keyword id="KW-0808">Transferase</keyword>
<sequence>MTTELLDRIHSPDDVRQLDRRELKALAEELRGFVLESVSRTGGHLSSNLGTVELTLALHRVFDTPHDRIVWDVGHQSYPHKILTGRRAGMASLRQEGGISGFPKRSESEYDAFGTAHSSTSISAALGMAVASRNAGIQRQHIAVIGDGAMSAGMAFEAMNNAGVTPDINLLVVLNDNDMSISPPVGALNRYLARLMSGRFYAAAKNVGRAMLQHVPPVLELARRFEEHAKGMVTPATLFEEFGFNYVGPIDGHDLDALVPTLQNLKALQGLQFLHVVTRKGHGYKLAEADPVLYHGPGKFDPAVGIQQGKASTRKTFTQVFGQWLCDMAERDERLVGITPAMREGSGLVEFERRFPRRYFDVGIAEQHAVTFAAGLACEGQKPVVAIYSTFLQRGYDQLIHDVALQNLDVTFALDRAGLVGADGATHAGNYDIAYLRCVPNMVVAAPSDENEARLLLSTCYEYPGPASVRYPRGAGRGAEISPGLDTVPMGKGIVRRQGRGIAILAFGTLTQAALAAAEALDATVADMRFVKPIDRELILQLAAGHDAIVTVEEAAIMGGAGSAVIEVLHHEGVVVPVLQLGLPDRFIDHGDQAALLAGLGLDAAGIERSIRARFEKSNLQSGAQTK</sequence>
<protein>
    <recommendedName>
        <fullName evidence="1">1-deoxy-D-xylulose-5-phosphate synthase</fullName>
        <ecNumber evidence="1">2.2.1.7</ecNumber>
    </recommendedName>
    <alternativeName>
        <fullName evidence="1">1-deoxyxylulose-5-phosphate synthase</fullName>
        <shortName evidence="1">DXP synthase</shortName>
        <shortName evidence="1">DXPS</shortName>
    </alternativeName>
</protein>
<name>DXS_BORPD</name>
<accession>A9ITB0</accession>
<dbReference type="EC" id="2.2.1.7" evidence="1"/>
<dbReference type="EMBL" id="AM902716">
    <property type="protein sequence ID" value="CAP43402.1"/>
    <property type="molecule type" value="Genomic_DNA"/>
</dbReference>
<dbReference type="SMR" id="A9ITB0"/>
<dbReference type="STRING" id="94624.Bpet3060"/>
<dbReference type="KEGG" id="bpt:Bpet3060"/>
<dbReference type="eggNOG" id="COG1154">
    <property type="taxonomic scope" value="Bacteria"/>
</dbReference>
<dbReference type="UniPathway" id="UPA00064">
    <property type="reaction ID" value="UER00091"/>
</dbReference>
<dbReference type="Proteomes" id="UP000001225">
    <property type="component" value="Chromosome"/>
</dbReference>
<dbReference type="GO" id="GO:0005829">
    <property type="term" value="C:cytosol"/>
    <property type="evidence" value="ECO:0007669"/>
    <property type="project" value="TreeGrafter"/>
</dbReference>
<dbReference type="GO" id="GO:0008661">
    <property type="term" value="F:1-deoxy-D-xylulose-5-phosphate synthase activity"/>
    <property type="evidence" value="ECO:0007669"/>
    <property type="project" value="UniProtKB-UniRule"/>
</dbReference>
<dbReference type="GO" id="GO:0000287">
    <property type="term" value="F:magnesium ion binding"/>
    <property type="evidence" value="ECO:0007669"/>
    <property type="project" value="UniProtKB-UniRule"/>
</dbReference>
<dbReference type="GO" id="GO:0030976">
    <property type="term" value="F:thiamine pyrophosphate binding"/>
    <property type="evidence" value="ECO:0007669"/>
    <property type="project" value="UniProtKB-UniRule"/>
</dbReference>
<dbReference type="GO" id="GO:0052865">
    <property type="term" value="P:1-deoxy-D-xylulose 5-phosphate biosynthetic process"/>
    <property type="evidence" value="ECO:0007669"/>
    <property type="project" value="UniProtKB-UniPathway"/>
</dbReference>
<dbReference type="GO" id="GO:0019288">
    <property type="term" value="P:isopentenyl diphosphate biosynthetic process, methylerythritol 4-phosphate pathway"/>
    <property type="evidence" value="ECO:0007669"/>
    <property type="project" value="TreeGrafter"/>
</dbReference>
<dbReference type="GO" id="GO:0016114">
    <property type="term" value="P:terpenoid biosynthetic process"/>
    <property type="evidence" value="ECO:0007669"/>
    <property type="project" value="UniProtKB-UniRule"/>
</dbReference>
<dbReference type="GO" id="GO:0009228">
    <property type="term" value="P:thiamine biosynthetic process"/>
    <property type="evidence" value="ECO:0007669"/>
    <property type="project" value="UniProtKB-UniRule"/>
</dbReference>
<dbReference type="CDD" id="cd02007">
    <property type="entry name" value="TPP_DXS"/>
    <property type="match status" value="1"/>
</dbReference>
<dbReference type="CDD" id="cd07033">
    <property type="entry name" value="TPP_PYR_DXS_TK_like"/>
    <property type="match status" value="1"/>
</dbReference>
<dbReference type="FunFam" id="3.40.50.920:FF:000002">
    <property type="entry name" value="1-deoxy-D-xylulose-5-phosphate synthase"/>
    <property type="match status" value="1"/>
</dbReference>
<dbReference type="FunFam" id="3.40.50.970:FF:000005">
    <property type="entry name" value="1-deoxy-D-xylulose-5-phosphate synthase"/>
    <property type="match status" value="1"/>
</dbReference>
<dbReference type="Gene3D" id="3.40.50.920">
    <property type="match status" value="1"/>
</dbReference>
<dbReference type="Gene3D" id="3.40.50.970">
    <property type="match status" value="2"/>
</dbReference>
<dbReference type="HAMAP" id="MF_00315">
    <property type="entry name" value="DXP_synth"/>
    <property type="match status" value="1"/>
</dbReference>
<dbReference type="InterPro" id="IPR005477">
    <property type="entry name" value="Dxylulose-5-P_synthase"/>
</dbReference>
<dbReference type="InterPro" id="IPR029061">
    <property type="entry name" value="THDP-binding"/>
</dbReference>
<dbReference type="InterPro" id="IPR009014">
    <property type="entry name" value="Transketo_C/PFOR_II"/>
</dbReference>
<dbReference type="InterPro" id="IPR005475">
    <property type="entry name" value="Transketolase-like_Pyr-bd"/>
</dbReference>
<dbReference type="InterPro" id="IPR020826">
    <property type="entry name" value="Transketolase_BS"/>
</dbReference>
<dbReference type="InterPro" id="IPR033248">
    <property type="entry name" value="Transketolase_C"/>
</dbReference>
<dbReference type="InterPro" id="IPR049557">
    <property type="entry name" value="Transketolase_CS"/>
</dbReference>
<dbReference type="NCBIfam" id="TIGR00204">
    <property type="entry name" value="dxs"/>
    <property type="match status" value="1"/>
</dbReference>
<dbReference type="NCBIfam" id="NF003933">
    <property type="entry name" value="PRK05444.2-2"/>
    <property type="match status" value="1"/>
</dbReference>
<dbReference type="PANTHER" id="PTHR43322">
    <property type="entry name" value="1-D-DEOXYXYLULOSE 5-PHOSPHATE SYNTHASE-RELATED"/>
    <property type="match status" value="1"/>
</dbReference>
<dbReference type="PANTHER" id="PTHR43322:SF5">
    <property type="entry name" value="1-DEOXY-D-XYLULOSE-5-PHOSPHATE SYNTHASE, CHLOROPLASTIC"/>
    <property type="match status" value="1"/>
</dbReference>
<dbReference type="Pfam" id="PF13292">
    <property type="entry name" value="DXP_synthase_N"/>
    <property type="match status" value="1"/>
</dbReference>
<dbReference type="Pfam" id="PF02779">
    <property type="entry name" value="Transket_pyr"/>
    <property type="match status" value="1"/>
</dbReference>
<dbReference type="Pfam" id="PF02780">
    <property type="entry name" value="Transketolase_C"/>
    <property type="match status" value="1"/>
</dbReference>
<dbReference type="SMART" id="SM00861">
    <property type="entry name" value="Transket_pyr"/>
    <property type="match status" value="1"/>
</dbReference>
<dbReference type="SUPFAM" id="SSF52518">
    <property type="entry name" value="Thiamin diphosphate-binding fold (THDP-binding)"/>
    <property type="match status" value="2"/>
</dbReference>
<dbReference type="SUPFAM" id="SSF52922">
    <property type="entry name" value="TK C-terminal domain-like"/>
    <property type="match status" value="1"/>
</dbReference>
<dbReference type="PROSITE" id="PS00801">
    <property type="entry name" value="TRANSKETOLASE_1"/>
    <property type="match status" value="1"/>
</dbReference>
<dbReference type="PROSITE" id="PS00802">
    <property type="entry name" value="TRANSKETOLASE_2"/>
    <property type="match status" value="1"/>
</dbReference>
<evidence type="ECO:0000255" key="1">
    <source>
        <dbReference type="HAMAP-Rule" id="MF_00315"/>
    </source>
</evidence>
<proteinExistence type="inferred from homology"/>
<comment type="function">
    <text evidence="1">Catalyzes the acyloin condensation reaction between C atoms 2 and 3 of pyruvate and glyceraldehyde 3-phosphate to yield 1-deoxy-D-xylulose-5-phosphate (DXP).</text>
</comment>
<comment type="catalytic activity">
    <reaction evidence="1">
        <text>D-glyceraldehyde 3-phosphate + pyruvate + H(+) = 1-deoxy-D-xylulose 5-phosphate + CO2</text>
        <dbReference type="Rhea" id="RHEA:12605"/>
        <dbReference type="ChEBI" id="CHEBI:15361"/>
        <dbReference type="ChEBI" id="CHEBI:15378"/>
        <dbReference type="ChEBI" id="CHEBI:16526"/>
        <dbReference type="ChEBI" id="CHEBI:57792"/>
        <dbReference type="ChEBI" id="CHEBI:59776"/>
        <dbReference type="EC" id="2.2.1.7"/>
    </reaction>
</comment>
<comment type="cofactor">
    <cofactor evidence="1">
        <name>Mg(2+)</name>
        <dbReference type="ChEBI" id="CHEBI:18420"/>
    </cofactor>
    <text evidence="1">Binds 1 Mg(2+) ion per subunit.</text>
</comment>
<comment type="cofactor">
    <cofactor evidence="1">
        <name>thiamine diphosphate</name>
        <dbReference type="ChEBI" id="CHEBI:58937"/>
    </cofactor>
    <text evidence="1">Binds 1 thiamine pyrophosphate per subunit.</text>
</comment>
<comment type="pathway">
    <text evidence="1">Metabolic intermediate biosynthesis; 1-deoxy-D-xylulose 5-phosphate biosynthesis; 1-deoxy-D-xylulose 5-phosphate from D-glyceraldehyde 3-phosphate and pyruvate: step 1/1.</text>
</comment>
<comment type="subunit">
    <text evidence="1">Homodimer.</text>
</comment>
<comment type="similarity">
    <text evidence="1">Belongs to the transketolase family. DXPS subfamily.</text>
</comment>